<name>ACLO_ASPOR</name>
<comment type="function">
    <text evidence="2">Cytochrome P450 monooxygenase; part of the gene cluster that mediates the biosynthesis of aspirochlorine (or antibiotic A30641), an unusual halogenated spiro compound with distinctive antifungal properties due to selective inhibition of protein biosynthesis, and which is also active against bacteria, viruses, and murine tumor cells (PubMed:25302411). The non-ribosomal peptide synthetase (NRPS) aclP is responsible the formation of the diketopiperazine (DKP) core from the condensation of 2 phenylalanine residues (PubMed:25302411). One Phe residue is tailored into chlorotyrosine by hydroxylation and chlorination, whereas the second Phe undergoes an unprecedented C-C bond cleavage to be converted into glycine (PubMed:25302411). After formation of the DKP, sulfur is incorporated into the DKP by conjugation with glutathione by aclG, followed by its stepwise degradation to the thiol by aclI, aclJ and aclK, and the dithiol oxidation by aclT (PubMed:25302411). In addition, oxygenases (aclB, aclC, aclL and aclO) and O-methyltransferases (aclM and aclU) act as tailoring enzymes to produce the intermediate dechloroaspirochlorine (PubMed:25302411). Ultimately, chlorination of dechloroaspirochlorine by the halogenase aclH is the last step in the aspirochlorine pathway (PubMed:25302411).</text>
</comment>
<comment type="cofactor">
    <cofactor evidence="1">
        <name>heme</name>
        <dbReference type="ChEBI" id="CHEBI:30413"/>
    </cofactor>
</comment>
<comment type="pathway">
    <text evidence="5">Mycotoxin biosynthesis.</text>
</comment>
<comment type="similarity">
    <text evidence="4">Belongs to the cytochrome P450 family.</text>
</comment>
<comment type="sequence caution" evidence="4">
    <conflict type="erroneous gene model prediction">
        <sequence resource="EMBL-CDS" id="BAE56589"/>
    </conflict>
</comment>
<comment type="sequence caution" evidence="4">
    <conflict type="erroneous gene model prediction">
        <sequence resource="EMBL-CDS" id="BAE56590"/>
    </conflict>
</comment>
<proteinExistence type="inferred from homology"/>
<dbReference type="EC" id="1.-.-.-" evidence="5"/>
<dbReference type="EMBL" id="BA000050">
    <property type="protein sequence ID" value="BAE56590.1"/>
    <property type="status" value="ALT_SEQ"/>
    <property type="molecule type" value="Genomic_DNA"/>
</dbReference>
<dbReference type="EMBL" id="BA000050">
    <property type="protein sequence ID" value="BAE56589.1"/>
    <property type="status" value="ALT_SEQ"/>
    <property type="molecule type" value="Genomic_DNA"/>
</dbReference>
<dbReference type="SMR" id="Q2UPC5"/>
<dbReference type="STRING" id="510516.Q2UPC5"/>
<dbReference type="EnsemblFungi" id="BAE56589">
    <property type="protein sequence ID" value="BAE56589"/>
    <property type="gene ID" value="AO090001000025"/>
</dbReference>
<dbReference type="HOGENOM" id="CLU_1916632_0_0_1"/>
<dbReference type="Proteomes" id="UP000006564">
    <property type="component" value="Chromosome 2"/>
</dbReference>
<dbReference type="GO" id="GO:0020037">
    <property type="term" value="F:heme binding"/>
    <property type="evidence" value="ECO:0007669"/>
    <property type="project" value="InterPro"/>
</dbReference>
<dbReference type="GO" id="GO:0005506">
    <property type="term" value="F:iron ion binding"/>
    <property type="evidence" value="ECO:0007669"/>
    <property type="project" value="InterPro"/>
</dbReference>
<dbReference type="GO" id="GO:0004497">
    <property type="term" value="F:monooxygenase activity"/>
    <property type="evidence" value="ECO:0007669"/>
    <property type="project" value="UniProtKB-KW"/>
</dbReference>
<dbReference type="GO" id="GO:0016705">
    <property type="term" value="F:oxidoreductase activity, acting on paired donors, with incorporation or reduction of molecular oxygen"/>
    <property type="evidence" value="ECO:0007669"/>
    <property type="project" value="InterPro"/>
</dbReference>
<dbReference type="GO" id="GO:0019748">
    <property type="term" value="P:secondary metabolic process"/>
    <property type="evidence" value="ECO:0007669"/>
    <property type="project" value="UniProtKB-ARBA"/>
</dbReference>
<dbReference type="CDD" id="cd11041">
    <property type="entry name" value="CYP503A1-like"/>
    <property type="match status" value="1"/>
</dbReference>
<dbReference type="Gene3D" id="1.10.630.10">
    <property type="entry name" value="Cytochrome P450"/>
    <property type="match status" value="1"/>
</dbReference>
<dbReference type="InterPro" id="IPR001128">
    <property type="entry name" value="Cyt_P450"/>
</dbReference>
<dbReference type="InterPro" id="IPR017972">
    <property type="entry name" value="Cyt_P450_CS"/>
</dbReference>
<dbReference type="InterPro" id="IPR002403">
    <property type="entry name" value="Cyt_P450_E_grp-IV"/>
</dbReference>
<dbReference type="InterPro" id="IPR036396">
    <property type="entry name" value="Cyt_P450_sf"/>
</dbReference>
<dbReference type="PANTHER" id="PTHR46206">
    <property type="entry name" value="CYTOCHROME P450"/>
    <property type="match status" value="1"/>
</dbReference>
<dbReference type="Pfam" id="PF00067">
    <property type="entry name" value="p450"/>
    <property type="match status" value="1"/>
</dbReference>
<dbReference type="PRINTS" id="PR00465">
    <property type="entry name" value="EP450IV"/>
</dbReference>
<dbReference type="SUPFAM" id="SSF48264">
    <property type="entry name" value="Cytochrome P450"/>
    <property type="match status" value="2"/>
</dbReference>
<dbReference type="PROSITE" id="PS00086">
    <property type="entry name" value="CYTOCHROME_P450"/>
    <property type="match status" value="1"/>
</dbReference>
<sequence>MVKLVSLHISRSFIQSPLSRNQEWIDLTLDYAISTVTVAGKMSNTHWALRPFKGHFLPETADMSRQFTRARELLRPTLEARLQQRDKVPNDLMQWIINNYPDQEDDLTLHTRLQLEAVQAATYNLAIMQRPLDSSRVVELAEMRQLLEGVAKIEPDRDCERESLCTVTIPTPRWKHSAGWCLRLGTIYDDDSLWTDPTSFDGYRFEKLRTIKGNELKFQYASTSTSELNWGYGTHACPGRHYASNQIKLMIVSLLSRYEFQFDHEQTDKKAIVERPPNVVDGVRIMPNPQTLVMVRSLGNVNEGCE</sequence>
<protein>
    <recommendedName>
        <fullName evidence="3">Cytochrome P450 monooxygenase aclO</fullName>
        <ecNumber evidence="5">1.-.-.-</ecNumber>
    </recommendedName>
    <alternativeName>
        <fullName evidence="3">Aspirochlorine biosynthesis protein O</fullName>
    </alternativeName>
</protein>
<gene>
    <name evidence="3" type="primary">aclO</name>
    <name type="ORF">AO090001000025</name>
    <name type="ORF">AO090001000026</name>
</gene>
<feature type="chain" id="PRO_0000441197" description="Cytochrome P450 monooxygenase aclO">
    <location>
        <begin position="1"/>
        <end position="306"/>
    </location>
</feature>
<feature type="binding site" description="axial binding residue" evidence="1">
    <location>
        <position position="237"/>
    </location>
    <ligand>
        <name>heme</name>
        <dbReference type="ChEBI" id="CHEBI:30413"/>
    </ligand>
    <ligandPart>
        <name>Fe</name>
        <dbReference type="ChEBI" id="CHEBI:18248"/>
    </ligandPart>
</feature>
<evidence type="ECO:0000250" key="1">
    <source>
        <dbReference type="UniProtKB" id="P04798"/>
    </source>
</evidence>
<evidence type="ECO:0000269" key="2">
    <source>
    </source>
</evidence>
<evidence type="ECO:0000303" key="3">
    <source>
    </source>
</evidence>
<evidence type="ECO:0000305" key="4"/>
<evidence type="ECO:0000305" key="5">
    <source>
    </source>
</evidence>
<organism>
    <name type="scientific">Aspergillus oryzae (strain ATCC 42149 / RIB 40)</name>
    <name type="common">Yellow koji mold</name>
    <dbReference type="NCBI Taxonomy" id="510516"/>
    <lineage>
        <taxon>Eukaryota</taxon>
        <taxon>Fungi</taxon>
        <taxon>Dikarya</taxon>
        <taxon>Ascomycota</taxon>
        <taxon>Pezizomycotina</taxon>
        <taxon>Eurotiomycetes</taxon>
        <taxon>Eurotiomycetidae</taxon>
        <taxon>Eurotiales</taxon>
        <taxon>Aspergillaceae</taxon>
        <taxon>Aspergillus</taxon>
        <taxon>Aspergillus subgen. Circumdati</taxon>
    </lineage>
</organism>
<reference key="1">
    <citation type="journal article" date="2005" name="Nature">
        <title>Genome sequencing and analysis of Aspergillus oryzae.</title>
        <authorList>
            <person name="Machida M."/>
            <person name="Asai K."/>
            <person name="Sano M."/>
            <person name="Tanaka T."/>
            <person name="Kumagai T."/>
            <person name="Terai G."/>
            <person name="Kusumoto K."/>
            <person name="Arima T."/>
            <person name="Akita O."/>
            <person name="Kashiwagi Y."/>
            <person name="Abe K."/>
            <person name="Gomi K."/>
            <person name="Horiuchi H."/>
            <person name="Kitamoto K."/>
            <person name="Kobayashi T."/>
            <person name="Takeuchi M."/>
            <person name="Denning D.W."/>
            <person name="Galagan J.E."/>
            <person name="Nierman W.C."/>
            <person name="Yu J."/>
            <person name="Archer D.B."/>
            <person name="Bennett J.W."/>
            <person name="Bhatnagar D."/>
            <person name="Cleveland T.E."/>
            <person name="Fedorova N.D."/>
            <person name="Gotoh O."/>
            <person name="Horikawa H."/>
            <person name="Hosoyama A."/>
            <person name="Ichinomiya M."/>
            <person name="Igarashi R."/>
            <person name="Iwashita K."/>
            <person name="Juvvadi P.R."/>
            <person name="Kato M."/>
            <person name="Kato Y."/>
            <person name="Kin T."/>
            <person name="Kokubun A."/>
            <person name="Maeda H."/>
            <person name="Maeyama N."/>
            <person name="Maruyama J."/>
            <person name="Nagasaki H."/>
            <person name="Nakajima T."/>
            <person name="Oda K."/>
            <person name="Okada K."/>
            <person name="Paulsen I."/>
            <person name="Sakamoto K."/>
            <person name="Sawano T."/>
            <person name="Takahashi M."/>
            <person name="Takase K."/>
            <person name="Terabayashi Y."/>
            <person name="Wortman J.R."/>
            <person name="Yamada O."/>
            <person name="Yamagata Y."/>
            <person name="Anazawa H."/>
            <person name="Hata Y."/>
            <person name="Koide Y."/>
            <person name="Komori T."/>
            <person name="Koyama Y."/>
            <person name="Minetoki T."/>
            <person name="Suharnan S."/>
            <person name="Tanaka A."/>
            <person name="Isono K."/>
            <person name="Kuhara S."/>
            <person name="Ogasawara N."/>
            <person name="Kikuchi H."/>
        </authorList>
    </citation>
    <scope>NUCLEOTIDE SEQUENCE [LARGE SCALE GENOMIC DNA]</scope>
    <source>
        <strain>ATCC 42149 / RIB 40</strain>
    </source>
</reference>
<reference key="2">
    <citation type="journal article" date="2014" name="Angew. Chem. Int. Ed.">
        <title>Biosynthesis of the halogenated mycotoxin aspirochlorine in koji mold involves a cryptic amino acid conversion.</title>
        <authorList>
            <person name="Chankhamjon P."/>
            <person name="Boettger-Schmidt D."/>
            <person name="Scherlach K."/>
            <person name="Urbansky B."/>
            <person name="Lackner G."/>
            <person name="Kalb D."/>
            <person name="Dahse H.M."/>
            <person name="Hoffmeister D."/>
            <person name="Hertweck C."/>
        </authorList>
    </citation>
    <scope>FUNCTION</scope>
    <scope>PATHWAY</scope>
</reference>
<keyword id="KW-0349">Heme</keyword>
<keyword id="KW-0408">Iron</keyword>
<keyword id="KW-0479">Metal-binding</keyword>
<keyword id="KW-0503">Monooxygenase</keyword>
<keyword id="KW-0560">Oxidoreductase</keyword>
<keyword id="KW-1185">Reference proteome</keyword>
<accession>Q2UPC5</accession>
<accession>Q2UPC6</accession>